<dbReference type="EMBL" id="CR382131">
    <property type="protein sequence ID" value="CAG79276.1"/>
    <property type="molecule type" value="Genomic_DNA"/>
</dbReference>
<dbReference type="RefSeq" id="XP_503687.1">
    <property type="nucleotide sequence ID" value="XM_503687.1"/>
</dbReference>
<dbReference type="SMR" id="Q6C6M5"/>
<dbReference type="FunCoup" id="Q6C6M5">
    <property type="interactions" value="40"/>
</dbReference>
<dbReference type="STRING" id="284591.Q6C6M5"/>
<dbReference type="EnsemblFungi" id="CAG79276">
    <property type="protein sequence ID" value="CAG79276"/>
    <property type="gene ID" value="YALI0_E08184g"/>
</dbReference>
<dbReference type="KEGG" id="yli:2912479"/>
<dbReference type="VEuPathDB" id="FungiDB:YALI0_E08184g"/>
<dbReference type="HOGENOM" id="CLU_045277_9_0_1"/>
<dbReference type="InParanoid" id="Q6C6M5"/>
<dbReference type="OMA" id="AHKQCIE"/>
<dbReference type="OrthoDB" id="124342at4891"/>
<dbReference type="Proteomes" id="UP000001300">
    <property type="component" value="Chromosome E"/>
</dbReference>
<dbReference type="GO" id="GO:0017054">
    <property type="term" value="C:negative cofactor 2 complex"/>
    <property type="evidence" value="ECO:0000318"/>
    <property type="project" value="GO_Central"/>
</dbReference>
<dbReference type="GO" id="GO:0005634">
    <property type="term" value="C:nucleus"/>
    <property type="evidence" value="ECO:0000318"/>
    <property type="project" value="GO_Central"/>
</dbReference>
<dbReference type="GO" id="GO:0001046">
    <property type="term" value="F:core promoter sequence-specific DNA binding"/>
    <property type="evidence" value="ECO:0000318"/>
    <property type="project" value="GO_Central"/>
</dbReference>
<dbReference type="GO" id="GO:0046982">
    <property type="term" value="F:protein heterodimerization activity"/>
    <property type="evidence" value="ECO:0007669"/>
    <property type="project" value="InterPro"/>
</dbReference>
<dbReference type="GO" id="GO:0016251">
    <property type="term" value="F:RNA polymerase II general transcription initiation factor activity"/>
    <property type="evidence" value="ECO:0000318"/>
    <property type="project" value="GO_Central"/>
</dbReference>
<dbReference type="GO" id="GO:0006260">
    <property type="term" value="P:DNA replication"/>
    <property type="evidence" value="ECO:0007669"/>
    <property type="project" value="UniProtKB-KW"/>
</dbReference>
<dbReference type="GO" id="GO:0006366">
    <property type="term" value="P:transcription by RNA polymerase II"/>
    <property type="evidence" value="ECO:0000318"/>
    <property type="project" value="GO_Central"/>
</dbReference>
<dbReference type="CDD" id="cd22906">
    <property type="entry name" value="HFD_DRAP1"/>
    <property type="match status" value="1"/>
</dbReference>
<dbReference type="FunFam" id="1.10.20.10:FF:000036">
    <property type="entry name" value="CBF/NF-Y family transcription factor"/>
    <property type="match status" value="1"/>
</dbReference>
<dbReference type="Gene3D" id="1.10.20.10">
    <property type="entry name" value="Histone, subunit A"/>
    <property type="match status" value="1"/>
</dbReference>
<dbReference type="InterPro" id="IPR003958">
    <property type="entry name" value="CBFA_NFYB_domain"/>
</dbReference>
<dbReference type="InterPro" id="IPR009072">
    <property type="entry name" value="Histone-fold"/>
</dbReference>
<dbReference type="InterPro" id="IPR050568">
    <property type="entry name" value="Transcr_DNA_Rep_Reg"/>
</dbReference>
<dbReference type="PANTHER" id="PTHR10252:SF5">
    <property type="entry name" value="DR1-ASSOCIATED COREPRESSOR"/>
    <property type="match status" value="1"/>
</dbReference>
<dbReference type="PANTHER" id="PTHR10252">
    <property type="entry name" value="HISTONE-LIKE TRANSCRIPTION FACTOR CCAAT-RELATED"/>
    <property type="match status" value="1"/>
</dbReference>
<dbReference type="Pfam" id="PF00808">
    <property type="entry name" value="CBFD_NFYB_HMF"/>
    <property type="match status" value="1"/>
</dbReference>
<dbReference type="SUPFAM" id="SSF47113">
    <property type="entry name" value="Histone-fold"/>
    <property type="match status" value="1"/>
</dbReference>
<gene>
    <name type="primary">DPB3</name>
    <name type="ordered locus">YALI0E08184g</name>
</gene>
<name>DPB3_YARLI</name>
<comment type="function">
    <text evidence="2">As accessory component of the DNA polymerase epsilon (DNA polymerase II) participates in chromosomal DNA replication.</text>
</comment>
<comment type="subunit">
    <text evidence="1">Heterotetramer. Consists of four subunits: POL2, DPB2, DPB3 and DPB4 (By similarity).</text>
</comment>
<comment type="subcellular location">
    <subcellularLocation>
        <location evidence="1">Nucleus</location>
    </subcellularLocation>
</comment>
<comment type="miscellaneous">
    <text>In eukaryotes there are five DNA polymerases: alpha, beta, gamma, delta, and epsilon which are responsible for different reactions of DNA synthesis.</text>
</comment>
<sequence>MSEKPREIKTRFPVARIKKLMQSDDDIGKVAQATPTAVAKALELFMISLIEETCNQARMRNSKRVSPSHLKQAVLETEQFDFLQDIVSKHPDAVAPATGEEEQPKRRGRKPAQE</sequence>
<evidence type="ECO:0000250" key="1"/>
<evidence type="ECO:0000250" key="2">
    <source>
        <dbReference type="UniProtKB" id="P27344"/>
    </source>
</evidence>
<evidence type="ECO:0000256" key="3">
    <source>
        <dbReference type="SAM" id="MobiDB-lite"/>
    </source>
</evidence>
<feature type="chain" id="PRO_0000208349" description="DNA polymerase epsilon subunit C">
    <location>
        <begin position="1"/>
        <end position="114"/>
    </location>
</feature>
<feature type="region of interest" description="Disordered" evidence="3">
    <location>
        <begin position="91"/>
        <end position="114"/>
    </location>
</feature>
<accession>Q6C6M5</accession>
<reference key="1">
    <citation type="journal article" date="2004" name="Nature">
        <title>Genome evolution in yeasts.</title>
        <authorList>
            <person name="Dujon B."/>
            <person name="Sherman D."/>
            <person name="Fischer G."/>
            <person name="Durrens P."/>
            <person name="Casaregola S."/>
            <person name="Lafontaine I."/>
            <person name="de Montigny J."/>
            <person name="Marck C."/>
            <person name="Neuveglise C."/>
            <person name="Talla E."/>
            <person name="Goffard N."/>
            <person name="Frangeul L."/>
            <person name="Aigle M."/>
            <person name="Anthouard V."/>
            <person name="Babour A."/>
            <person name="Barbe V."/>
            <person name="Barnay S."/>
            <person name="Blanchin S."/>
            <person name="Beckerich J.-M."/>
            <person name="Beyne E."/>
            <person name="Bleykasten C."/>
            <person name="Boisrame A."/>
            <person name="Boyer J."/>
            <person name="Cattolico L."/>
            <person name="Confanioleri F."/>
            <person name="de Daruvar A."/>
            <person name="Despons L."/>
            <person name="Fabre E."/>
            <person name="Fairhead C."/>
            <person name="Ferry-Dumazet H."/>
            <person name="Groppi A."/>
            <person name="Hantraye F."/>
            <person name="Hennequin C."/>
            <person name="Jauniaux N."/>
            <person name="Joyet P."/>
            <person name="Kachouri R."/>
            <person name="Kerrest A."/>
            <person name="Koszul R."/>
            <person name="Lemaire M."/>
            <person name="Lesur I."/>
            <person name="Ma L."/>
            <person name="Muller H."/>
            <person name="Nicaud J.-M."/>
            <person name="Nikolski M."/>
            <person name="Oztas S."/>
            <person name="Ozier-Kalogeropoulos O."/>
            <person name="Pellenz S."/>
            <person name="Potier S."/>
            <person name="Richard G.-F."/>
            <person name="Straub M.-L."/>
            <person name="Suleau A."/>
            <person name="Swennen D."/>
            <person name="Tekaia F."/>
            <person name="Wesolowski-Louvel M."/>
            <person name="Westhof E."/>
            <person name="Wirth B."/>
            <person name="Zeniou-Meyer M."/>
            <person name="Zivanovic Y."/>
            <person name="Bolotin-Fukuhara M."/>
            <person name="Thierry A."/>
            <person name="Bouchier C."/>
            <person name="Caudron B."/>
            <person name="Scarpelli C."/>
            <person name="Gaillardin C."/>
            <person name="Weissenbach J."/>
            <person name="Wincker P."/>
            <person name="Souciet J.-L."/>
        </authorList>
    </citation>
    <scope>NUCLEOTIDE SEQUENCE [LARGE SCALE GENOMIC DNA]</scope>
    <source>
        <strain>CLIB 122 / E 150</strain>
    </source>
</reference>
<organism>
    <name type="scientific">Yarrowia lipolytica (strain CLIB 122 / E 150)</name>
    <name type="common">Yeast</name>
    <name type="synonym">Candida lipolytica</name>
    <dbReference type="NCBI Taxonomy" id="284591"/>
    <lineage>
        <taxon>Eukaryota</taxon>
        <taxon>Fungi</taxon>
        <taxon>Dikarya</taxon>
        <taxon>Ascomycota</taxon>
        <taxon>Saccharomycotina</taxon>
        <taxon>Dipodascomycetes</taxon>
        <taxon>Dipodascales</taxon>
        <taxon>Dipodascales incertae sedis</taxon>
        <taxon>Yarrowia</taxon>
    </lineage>
</organism>
<proteinExistence type="inferred from homology"/>
<protein>
    <recommendedName>
        <fullName>DNA polymerase epsilon subunit C</fullName>
    </recommendedName>
    <alternativeName>
        <fullName>DNA polymerase II subunit C</fullName>
    </alternativeName>
</protein>
<keyword id="KW-0235">DNA replication</keyword>
<keyword id="KW-0539">Nucleus</keyword>
<keyword id="KW-1185">Reference proteome</keyword>